<feature type="chain" id="PRO_0000067146" description="Putative ankyrin repeat protein L72">
    <location>
        <begin position="1"/>
        <end position="384"/>
    </location>
</feature>
<feature type="repeat" description="ANK 1">
    <location>
        <begin position="88"/>
        <end position="117"/>
    </location>
</feature>
<feature type="repeat" description="ANK 2">
    <location>
        <begin position="119"/>
        <end position="146"/>
    </location>
</feature>
<feature type="repeat" description="ANK 3">
    <location>
        <begin position="171"/>
        <end position="200"/>
    </location>
</feature>
<feature type="repeat" description="ANK 4">
    <location>
        <begin position="202"/>
        <end position="231"/>
    </location>
</feature>
<feature type="repeat" description="ANK 5">
    <location>
        <begin position="233"/>
        <end position="261"/>
    </location>
</feature>
<feature type="repeat" description="ANK 6">
    <location>
        <begin position="298"/>
        <end position="324"/>
    </location>
</feature>
<feature type="repeat" description="ANK 7">
    <location>
        <begin position="325"/>
        <end position="357"/>
    </location>
</feature>
<accession>Q5UPF1</accession>
<gene>
    <name type="ordered locus">MIMI_L72</name>
</gene>
<organismHost>
    <name type="scientific">Acanthamoeba polyphaga</name>
    <name type="common">Amoeba</name>
    <dbReference type="NCBI Taxonomy" id="5757"/>
</organismHost>
<keyword id="KW-0040">ANK repeat</keyword>
<keyword id="KW-1185">Reference proteome</keyword>
<keyword id="KW-0677">Repeat</keyword>
<sequence length="384" mass="44275">MNNIRPKYYAFYNKISEGYYNPLYRKGLNKDTIYEIMVEDGFPTEKNVSFVSIENIFQQINFGSHIAEVFVPGYVKTSYNETTLKHYADMCIIGDIMNFYDINTIRYLIDNGANIKNCGNLLCQASQLGCIDIVKLLVKTSEKEFSGMDDLTRSNKLISTQEIFTDFKNNDHNVCILIAIVYKHIDVVKYFISIGEILSVKDDSLYFKLACDTGCLNIIKYLLEIGFDIESNNNYCLMISTINGRNDIVEYIKSRGVNPNNHVKKCIQIITNHNDDLKSSDIFLMTKFIKTTGVNSNILYQLLLIACEYGYYSMTMYLIKAGIKPTNSCLKIACKNNKFNIVKLITKYPKTRLDINVDNNYCMKQAIFHKNKDMVDYLTNFKYV</sequence>
<dbReference type="EMBL" id="AY653733">
    <property type="protein sequence ID" value="AAV50347.1"/>
    <property type="molecule type" value="Genomic_DNA"/>
</dbReference>
<dbReference type="SMR" id="Q5UPF1"/>
<dbReference type="KEGG" id="vg:9924666"/>
<dbReference type="OrthoDB" id="9992at10239"/>
<dbReference type="Proteomes" id="UP000001134">
    <property type="component" value="Genome"/>
</dbReference>
<dbReference type="Gene3D" id="1.25.40.20">
    <property type="entry name" value="Ankyrin repeat-containing domain"/>
    <property type="match status" value="2"/>
</dbReference>
<dbReference type="InterPro" id="IPR002110">
    <property type="entry name" value="Ankyrin_rpt"/>
</dbReference>
<dbReference type="InterPro" id="IPR036770">
    <property type="entry name" value="Ankyrin_rpt-contain_sf"/>
</dbReference>
<dbReference type="PANTHER" id="PTHR24188">
    <property type="entry name" value="ANKYRIN REPEAT PROTEIN"/>
    <property type="match status" value="1"/>
</dbReference>
<dbReference type="PANTHER" id="PTHR24188:SF29">
    <property type="entry name" value="GH09064P"/>
    <property type="match status" value="1"/>
</dbReference>
<dbReference type="Pfam" id="PF12796">
    <property type="entry name" value="Ank_2"/>
    <property type="match status" value="1"/>
</dbReference>
<dbReference type="SMART" id="SM00248">
    <property type="entry name" value="ANK"/>
    <property type="match status" value="6"/>
</dbReference>
<dbReference type="SUPFAM" id="SSF48403">
    <property type="entry name" value="Ankyrin repeat"/>
    <property type="match status" value="1"/>
</dbReference>
<proteinExistence type="predicted"/>
<organism>
    <name type="scientific">Acanthamoeba polyphaga mimivirus</name>
    <name type="common">APMV</name>
    <dbReference type="NCBI Taxonomy" id="212035"/>
    <lineage>
        <taxon>Viruses</taxon>
        <taxon>Varidnaviria</taxon>
        <taxon>Bamfordvirae</taxon>
        <taxon>Nucleocytoviricota</taxon>
        <taxon>Megaviricetes</taxon>
        <taxon>Imitervirales</taxon>
        <taxon>Mimiviridae</taxon>
        <taxon>Megamimivirinae</taxon>
        <taxon>Mimivirus</taxon>
        <taxon>Mimivirus bradfordmassiliense</taxon>
    </lineage>
</organism>
<name>YL072_MIMIV</name>
<protein>
    <recommendedName>
        <fullName>Putative ankyrin repeat protein L72</fullName>
    </recommendedName>
</protein>
<reference key="1">
    <citation type="journal article" date="2004" name="Science">
        <title>The 1.2-megabase genome sequence of Mimivirus.</title>
        <authorList>
            <person name="Raoult D."/>
            <person name="Audic S."/>
            <person name="Robert C."/>
            <person name="Abergel C."/>
            <person name="Renesto P."/>
            <person name="Ogata H."/>
            <person name="La Scola B."/>
            <person name="Susan M."/>
            <person name="Claverie J.-M."/>
        </authorList>
    </citation>
    <scope>NUCLEOTIDE SEQUENCE [LARGE SCALE GENOMIC DNA]</scope>
    <source>
        <strain>Rowbotham-Bradford</strain>
    </source>
</reference>